<evidence type="ECO:0000255" key="1">
    <source>
        <dbReference type="HAMAP-Rule" id="MF_00532"/>
    </source>
</evidence>
<evidence type="ECO:0000305" key="2"/>
<organism>
    <name type="scientific">Buchnera aphidicola subsp. Acyrthosiphon pisum (strain 5A)</name>
    <dbReference type="NCBI Taxonomy" id="563178"/>
    <lineage>
        <taxon>Bacteria</taxon>
        <taxon>Pseudomonadati</taxon>
        <taxon>Pseudomonadota</taxon>
        <taxon>Gammaproteobacteria</taxon>
        <taxon>Enterobacterales</taxon>
        <taxon>Erwiniaceae</taxon>
        <taxon>Buchnera</taxon>
    </lineage>
</organism>
<comment type="similarity">
    <text evidence="1">Belongs to the universal ribosomal protein uS9 family.</text>
</comment>
<proteinExistence type="inferred from homology"/>
<keyword id="KW-0687">Ribonucleoprotein</keyword>
<keyword id="KW-0689">Ribosomal protein</keyword>
<name>RS9_BUCA5</name>
<dbReference type="EMBL" id="CP001161">
    <property type="protein sequence ID" value="ACL30744.1"/>
    <property type="molecule type" value="Genomic_DNA"/>
</dbReference>
<dbReference type="RefSeq" id="WP_009874347.1">
    <property type="nucleotide sequence ID" value="NC_011833.1"/>
</dbReference>
<dbReference type="SMR" id="B8D9H3"/>
<dbReference type="KEGG" id="bap:BUAP5A_383"/>
<dbReference type="HOGENOM" id="CLU_046483_2_1_6"/>
<dbReference type="OrthoDB" id="9803965at2"/>
<dbReference type="Proteomes" id="UP000006904">
    <property type="component" value="Chromosome"/>
</dbReference>
<dbReference type="GO" id="GO:0022627">
    <property type="term" value="C:cytosolic small ribosomal subunit"/>
    <property type="evidence" value="ECO:0007669"/>
    <property type="project" value="TreeGrafter"/>
</dbReference>
<dbReference type="GO" id="GO:0003723">
    <property type="term" value="F:RNA binding"/>
    <property type="evidence" value="ECO:0007669"/>
    <property type="project" value="TreeGrafter"/>
</dbReference>
<dbReference type="GO" id="GO:0003735">
    <property type="term" value="F:structural constituent of ribosome"/>
    <property type="evidence" value="ECO:0007669"/>
    <property type="project" value="InterPro"/>
</dbReference>
<dbReference type="GO" id="GO:0006412">
    <property type="term" value="P:translation"/>
    <property type="evidence" value="ECO:0007669"/>
    <property type="project" value="UniProtKB-UniRule"/>
</dbReference>
<dbReference type="FunFam" id="3.30.230.10:FF:000001">
    <property type="entry name" value="30S ribosomal protein S9"/>
    <property type="match status" value="1"/>
</dbReference>
<dbReference type="Gene3D" id="3.30.230.10">
    <property type="match status" value="1"/>
</dbReference>
<dbReference type="HAMAP" id="MF_00532_B">
    <property type="entry name" value="Ribosomal_uS9_B"/>
    <property type="match status" value="1"/>
</dbReference>
<dbReference type="InterPro" id="IPR020568">
    <property type="entry name" value="Ribosomal_Su5_D2-typ_SF"/>
</dbReference>
<dbReference type="InterPro" id="IPR000754">
    <property type="entry name" value="Ribosomal_uS9"/>
</dbReference>
<dbReference type="InterPro" id="IPR023035">
    <property type="entry name" value="Ribosomal_uS9_bac/plastid"/>
</dbReference>
<dbReference type="InterPro" id="IPR020574">
    <property type="entry name" value="Ribosomal_uS9_CS"/>
</dbReference>
<dbReference type="InterPro" id="IPR014721">
    <property type="entry name" value="Ribsml_uS5_D2-typ_fold_subgr"/>
</dbReference>
<dbReference type="NCBIfam" id="NF001099">
    <property type="entry name" value="PRK00132.1"/>
    <property type="match status" value="1"/>
</dbReference>
<dbReference type="PANTHER" id="PTHR21569">
    <property type="entry name" value="RIBOSOMAL PROTEIN S9"/>
    <property type="match status" value="1"/>
</dbReference>
<dbReference type="PANTHER" id="PTHR21569:SF1">
    <property type="entry name" value="SMALL RIBOSOMAL SUBUNIT PROTEIN US9M"/>
    <property type="match status" value="1"/>
</dbReference>
<dbReference type="Pfam" id="PF00380">
    <property type="entry name" value="Ribosomal_S9"/>
    <property type="match status" value="1"/>
</dbReference>
<dbReference type="SUPFAM" id="SSF54211">
    <property type="entry name" value="Ribosomal protein S5 domain 2-like"/>
    <property type="match status" value="1"/>
</dbReference>
<dbReference type="PROSITE" id="PS00360">
    <property type="entry name" value="RIBOSOMAL_S9"/>
    <property type="match status" value="1"/>
</dbReference>
<gene>
    <name evidence="1" type="primary">rpsI</name>
    <name type="ordered locus">BUAP5A_383</name>
</gene>
<feature type="chain" id="PRO_1000146439" description="Small ribosomal subunit protein uS9">
    <location>
        <begin position="1"/>
        <end position="130"/>
    </location>
</feature>
<reference key="1">
    <citation type="journal article" date="2009" name="Science">
        <title>The dynamics and time scale of ongoing genomic erosion in symbiotic bacteria.</title>
        <authorList>
            <person name="Moran N.A."/>
            <person name="McLaughlin H.J."/>
            <person name="Sorek R."/>
        </authorList>
    </citation>
    <scope>NUCLEOTIDE SEQUENCE [LARGE SCALE GENOMIC DNA]</scope>
    <source>
        <strain>5A</strain>
    </source>
</reference>
<accession>B8D9H3</accession>
<sequence length="130" mass="14904">MIQTQNYGTGRRKSSSARVFLRSGNGEIVVNKRSLNEYFGRETSCMIVRQPLELVDMVDKFNIYITVKGGGISGQAGAIRQGITRALIKYNQTLRFELRKAGFVTRDSRQVERKKVGFRKARKRPQFSKR</sequence>
<protein>
    <recommendedName>
        <fullName evidence="1">Small ribosomal subunit protein uS9</fullName>
    </recommendedName>
    <alternativeName>
        <fullName evidence="2">30S ribosomal protein S9</fullName>
    </alternativeName>
</protein>